<feature type="chain" id="PRO_1000005606" description="Large ribosomal subunit protein uL10">
    <location>
        <begin position="1"/>
        <end position="166"/>
    </location>
</feature>
<gene>
    <name evidence="1" type="primary">rplJ</name>
    <name type="ordered locus">SSA_1104</name>
</gene>
<comment type="function">
    <text evidence="1">Forms part of the ribosomal stalk, playing a central role in the interaction of the ribosome with GTP-bound translation factors.</text>
</comment>
<comment type="subunit">
    <text evidence="1">Part of the ribosomal stalk of the 50S ribosomal subunit. The N-terminus interacts with L11 and the large rRNA to form the base of the stalk. The C-terminus forms an elongated spine to which L12 dimers bind in a sequential fashion forming a multimeric L10(L12)X complex.</text>
</comment>
<comment type="similarity">
    <text evidence="1">Belongs to the universal ribosomal protein uL10 family.</text>
</comment>
<evidence type="ECO:0000255" key="1">
    <source>
        <dbReference type="HAMAP-Rule" id="MF_00362"/>
    </source>
</evidence>
<evidence type="ECO:0000305" key="2"/>
<name>RL10_STRSV</name>
<protein>
    <recommendedName>
        <fullName evidence="1">Large ribosomal subunit protein uL10</fullName>
    </recommendedName>
    <alternativeName>
        <fullName evidence="2">50S ribosomal protein L10</fullName>
    </alternativeName>
</protein>
<reference key="1">
    <citation type="journal article" date="2007" name="J. Bacteriol.">
        <title>Genome of the opportunistic pathogen Streptococcus sanguinis.</title>
        <authorList>
            <person name="Xu P."/>
            <person name="Alves J.M."/>
            <person name="Kitten T."/>
            <person name="Brown A."/>
            <person name="Chen Z."/>
            <person name="Ozaki L.S."/>
            <person name="Manque P."/>
            <person name="Ge X."/>
            <person name="Serrano M.G."/>
            <person name="Puiu D."/>
            <person name="Hendricks S."/>
            <person name="Wang Y."/>
            <person name="Chaplin M.D."/>
            <person name="Akan D."/>
            <person name="Paik S."/>
            <person name="Peterson D.L."/>
            <person name="Macrina F.L."/>
            <person name="Buck G.A."/>
        </authorList>
    </citation>
    <scope>NUCLEOTIDE SEQUENCE [LARGE SCALE GENOMIC DNA]</scope>
    <source>
        <strain>SK36</strain>
    </source>
</reference>
<proteinExistence type="inferred from homology"/>
<organism>
    <name type="scientific">Streptococcus sanguinis (strain SK36)</name>
    <dbReference type="NCBI Taxonomy" id="388919"/>
    <lineage>
        <taxon>Bacteria</taxon>
        <taxon>Bacillati</taxon>
        <taxon>Bacillota</taxon>
        <taxon>Bacilli</taxon>
        <taxon>Lactobacillales</taxon>
        <taxon>Streptococcaceae</taxon>
        <taxon>Streptococcus</taxon>
    </lineage>
</organism>
<sequence>MSEAIIAKKAELVDAVAEKMKAAASIVVVDARGLTVEQDTVLRRELRGSEVEYKVIKNSILRRAAEKAGLEDLASIFVGPSAVAFSNEDVVAPAKILNDFAKNADALEIKGGAIEGAVASKEEILALATLPNREGLLSMLLSVLQAPVRNVALAVKAVADNKEDAA</sequence>
<dbReference type="EMBL" id="CP000387">
    <property type="protein sequence ID" value="ABN44516.1"/>
    <property type="molecule type" value="Genomic_DNA"/>
</dbReference>
<dbReference type="RefSeq" id="WP_011836923.1">
    <property type="nucleotide sequence ID" value="NC_009009.1"/>
</dbReference>
<dbReference type="RefSeq" id="YP_001035066.1">
    <property type="nucleotide sequence ID" value="NC_009009.1"/>
</dbReference>
<dbReference type="SMR" id="A3CMW1"/>
<dbReference type="STRING" id="388919.SSA_1104"/>
<dbReference type="KEGG" id="ssa:SSA_1104"/>
<dbReference type="PATRIC" id="fig|388919.9.peg.1050"/>
<dbReference type="eggNOG" id="COG0244">
    <property type="taxonomic scope" value="Bacteria"/>
</dbReference>
<dbReference type="HOGENOM" id="CLU_092227_2_0_9"/>
<dbReference type="OrthoDB" id="9808307at2"/>
<dbReference type="Proteomes" id="UP000002148">
    <property type="component" value="Chromosome"/>
</dbReference>
<dbReference type="GO" id="GO:0015934">
    <property type="term" value="C:large ribosomal subunit"/>
    <property type="evidence" value="ECO:0007669"/>
    <property type="project" value="InterPro"/>
</dbReference>
<dbReference type="GO" id="GO:0070180">
    <property type="term" value="F:large ribosomal subunit rRNA binding"/>
    <property type="evidence" value="ECO:0007669"/>
    <property type="project" value="UniProtKB-UniRule"/>
</dbReference>
<dbReference type="GO" id="GO:0003735">
    <property type="term" value="F:structural constituent of ribosome"/>
    <property type="evidence" value="ECO:0007669"/>
    <property type="project" value="InterPro"/>
</dbReference>
<dbReference type="GO" id="GO:0006412">
    <property type="term" value="P:translation"/>
    <property type="evidence" value="ECO:0007669"/>
    <property type="project" value="UniProtKB-UniRule"/>
</dbReference>
<dbReference type="CDD" id="cd05797">
    <property type="entry name" value="Ribosomal_L10"/>
    <property type="match status" value="1"/>
</dbReference>
<dbReference type="FunFam" id="3.30.70.1730:FF:000001">
    <property type="entry name" value="50S ribosomal protein L10"/>
    <property type="match status" value="1"/>
</dbReference>
<dbReference type="Gene3D" id="3.30.70.1730">
    <property type="match status" value="1"/>
</dbReference>
<dbReference type="HAMAP" id="MF_00362">
    <property type="entry name" value="Ribosomal_uL10"/>
    <property type="match status" value="1"/>
</dbReference>
<dbReference type="InterPro" id="IPR001790">
    <property type="entry name" value="Ribosomal_uL10"/>
</dbReference>
<dbReference type="InterPro" id="IPR043141">
    <property type="entry name" value="Ribosomal_uL10-like_sf"/>
</dbReference>
<dbReference type="InterPro" id="IPR022973">
    <property type="entry name" value="Ribosomal_uL10_bac"/>
</dbReference>
<dbReference type="InterPro" id="IPR047865">
    <property type="entry name" value="Ribosomal_uL10_bac_type"/>
</dbReference>
<dbReference type="InterPro" id="IPR002363">
    <property type="entry name" value="Ribosomal_uL10_CS_bac"/>
</dbReference>
<dbReference type="NCBIfam" id="NF000955">
    <property type="entry name" value="PRK00099.1-1"/>
    <property type="match status" value="1"/>
</dbReference>
<dbReference type="PANTHER" id="PTHR11560">
    <property type="entry name" value="39S RIBOSOMAL PROTEIN L10, MITOCHONDRIAL"/>
    <property type="match status" value="1"/>
</dbReference>
<dbReference type="Pfam" id="PF00466">
    <property type="entry name" value="Ribosomal_L10"/>
    <property type="match status" value="1"/>
</dbReference>
<dbReference type="SUPFAM" id="SSF160369">
    <property type="entry name" value="Ribosomal protein L10-like"/>
    <property type="match status" value="1"/>
</dbReference>
<dbReference type="PROSITE" id="PS01109">
    <property type="entry name" value="RIBOSOMAL_L10"/>
    <property type="match status" value="1"/>
</dbReference>
<keyword id="KW-1185">Reference proteome</keyword>
<keyword id="KW-0687">Ribonucleoprotein</keyword>
<keyword id="KW-0689">Ribosomal protein</keyword>
<keyword id="KW-0694">RNA-binding</keyword>
<keyword id="KW-0699">rRNA-binding</keyword>
<accession>A3CMW1</accession>